<accession>A9M0K2</accession>
<evidence type="ECO:0000255" key="1">
    <source>
        <dbReference type="HAMAP-Rule" id="MF_00151"/>
    </source>
</evidence>
<name>COAD_NEIM0</name>
<organism>
    <name type="scientific">Neisseria meningitidis serogroup C (strain 053442)</name>
    <dbReference type="NCBI Taxonomy" id="374833"/>
    <lineage>
        <taxon>Bacteria</taxon>
        <taxon>Pseudomonadati</taxon>
        <taxon>Pseudomonadota</taxon>
        <taxon>Betaproteobacteria</taxon>
        <taxon>Neisseriales</taxon>
        <taxon>Neisseriaceae</taxon>
        <taxon>Neisseria</taxon>
    </lineage>
</organism>
<reference key="1">
    <citation type="journal article" date="2008" name="Genomics">
        <title>Characterization of ST-4821 complex, a unique Neisseria meningitidis clone.</title>
        <authorList>
            <person name="Peng J."/>
            <person name="Yang L."/>
            <person name="Yang F."/>
            <person name="Yang J."/>
            <person name="Yan Y."/>
            <person name="Nie H."/>
            <person name="Zhang X."/>
            <person name="Xiong Z."/>
            <person name="Jiang Y."/>
            <person name="Cheng F."/>
            <person name="Xu X."/>
            <person name="Chen S."/>
            <person name="Sun L."/>
            <person name="Li W."/>
            <person name="Shen Y."/>
            <person name="Shao Z."/>
            <person name="Liang X."/>
            <person name="Xu J."/>
            <person name="Jin Q."/>
        </authorList>
    </citation>
    <scope>NUCLEOTIDE SEQUENCE [LARGE SCALE GENOMIC DNA]</scope>
    <source>
        <strain>053442</strain>
    </source>
</reference>
<dbReference type="EC" id="2.7.7.3" evidence="1"/>
<dbReference type="EMBL" id="CP000381">
    <property type="protein sequence ID" value="ABX72396.1"/>
    <property type="molecule type" value="Genomic_DNA"/>
</dbReference>
<dbReference type="RefSeq" id="WP_002218149.1">
    <property type="nucleotide sequence ID" value="NC_010120.1"/>
</dbReference>
<dbReference type="SMR" id="A9M0K2"/>
<dbReference type="GeneID" id="93386940"/>
<dbReference type="KEGG" id="nmn:NMCC_0180"/>
<dbReference type="HOGENOM" id="CLU_100149_0_1_4"/>
<dbReference type="UniPathway" id="UPA00241">
    <property type="reaction ID" value="UER00355"/>
</dbReference>
<dbReference type="Proteomes" id="UP000001177">
    <property type="component" value="Chromosome"/>
</dbReference>
<dbReference type="GO" id="GO:0005737">
    <property type="term" value="C:cytoplasm"/>
    <property type="evidence" value="ECO:0007669"/>
    <property type="project" value="UniProtKB-SubCell"/>
</dbReference>
<dbReference type="GO" id="GO:0005524">
    <property type="term" value="F:ATP binding"/>
    <property type="evidence" value="ECO:0007669"/>
    <property type="project" value="UniProtKB-KW"/>
</dbReference>
<dbReference type="GO" id="GO:0004595">
    <property type="term" value="F:pantetheine-phosphate adenylyltransferase activity"/>
    <property type="evidence" value="ECO:0007669"/>
    <property type="project" value="UniProtKB-UniRule"/>
</dbReference>
<dbReference type="GO" id="GO:0015937">
    <property type="term" value="P:coenzyme A biosynthetic process"/>
    <property type="evidence" value="ECO:0007669"/>
    <property type="project" value="UniProtKB-UniRule"/>
</dbReference>
<dbReference type="CDD" id="cd02163">
    <property type="entry name" value="PPAT"/>
    <property type="match status" value="1"/>
</dbReference>
<dbReference type="Gene3D" id="3.40.50.620">
    <property type="entry name" value="HUPs"/>
    <property type="match status" value="1"/>
</dbReference>
<dbReference type="HAMAP" id="MF_00151">
    <property type="entry name" value="PPAT_bact"/>
    <property type="match status" value="1"/>
</dbReference>
<dbReference type="InterPro" id="IPR004821">
    <property type="entry name" value="Cyt_trans-like"/>
</dbReference>
<dbReference type="InterPro" id="IPR001980">
    <property type="entry name" value="PPAT"/>
</dbReference>
<dbReference type="InterPro" id="IPR014729">
    <property type="entry name" value="Rossmann-like_a/b/a_fold"/>
</dbReference>
<dbReference type="NCBIfam" id="TIGR01510">
    <property type="entry name" value="coaD_prev_kdtB"/>
    <property type="match status" value="1"/>
</dbReference>
<dbReference type="NCBIfam" id="TIGR00125">
    <property type="entry name" value="cyt_tran_rel"/>
    <property type="match status" value="1"/>
</dbReference>
<dbReference type="PANTHER" id="PTHR21342">
    <property type="entry name" value="PHOSPHOPANTETHEINE ADENYLYLTRANSFERASE"/>
    <property type="match status" value="1"/>
</dbReference>
<dbReference type="PANTHER" id="PTHR21342:SF1">
    <property type="entry name" value="PHOSPHOPANTETHEINE ADENYLYLTRANSFERASE"/>
    <property type="match status" value="1"/>
</dbReference>
<dbReference type="Pfam" id="PF01467">
    <property type="entry name" value="CTP_transf_like"/>
    <property type="match status" value="1"/>
</dbReference>
<dbReference type="PRINTS" id="PR01020">
    <property type="entry name" value="LPSBIOSNTHSS"/>
</dbReference>
<dbReference type="SUPFAM" id="SSF52374">
    <property type="entry name" value="Nucleotidylyl transferase"/>
    <property type="match status" value="1"/>
</dbReference>
<gene>
    <name evidence="1" type="primary">coaD</name>
    <name type="ordered locus">NMCC_0180</name>
</gene>
<feature type="chain" id="PRO_1000076773" description="Phosphopantetheine adenylyltransferase">
    <location>
        <begin position="1"/>
        <end position="170"/>
    </location>
</feature>
<feature type="binding site" evidence="1">
    <location>
        <begin position="14"/>
        <end position="15"/>
    </location>
    <ligand>
        <name>ATP</name>
        <dbReference type="ChEBI" id="CHEBI:30616"/>
    </ligand>
</feature>
<feature type="binding site" evidence="1">
    <location>
        <position position="14"/>
    </location>
    <ligand>
        <name>substrate</name>
    </ligand>
</feature>
<feature type="binding site" evidence="1">
    <location>
        <position position="22"/>
    </location>
    <ligand>
        <name>ATP</name>
        <dbReference type="ChEBI" id="CHEBI:30616"/>
    </ligand>
</feature>
<feature type="binding site" evidence="1">
    <location>
        <position position="46"/>
    </location>
    <ligand>
        <name>substrate</name>
    </ligand>
</feature>
<feature type="binding site" evidence="1">
    <location>
        <position position="79"/>
    </location>
    <ligand>
        <name>substrate</name>
    </ligand>
</feature>
<feature type="binding site" evidence="1">
    <location>
        <position position="93"/>
    </location>
    <ligand>
        <name>substrate</name>
    </ligand>
</feature>
<feature type="binding site" evidence="1">
    <location>
        <begin position="94"/>
        <end position="96"/>
    </location>
    <ligand>
        <name>ATP</name>
        <dbReference type="ChEBI" id="CHEBI:30616"/>
    </ligand>
</feature>
<feature type="binding site" evidence="1">
    <location>
        <position position="104"/>
    </location>
    <ligand>
        <name>ATP</name>
        <dbReference type="ChEBI" id="CHEBI:30616"/>
    </ligand>
</feature>
<feature type="binding site" evidence="1">
    <location>
        <begin position="129"/>
        <end position="135"/>
    </location>
    <ligand>
        <name>ATP</name>
        <dbReference type="ChEBI" id="CHEBI:30616"/>
    </ligand>
</feature>
<feature type="site" description="Transition state stabilizer" evidence="1">
    <location>
        <position position="22"/>
    </location>
</feature>
<protein>
    <recommendedName>
        <fullName evidence="1">Phosphopantetheine adenylyltransferase</fullName>
        <ecNumber evidence="1">2.7.7.3</ecNumber>
    </recommendedName>
    <alternativeName>
        <fullName evidence="1">Dephospho-CoA pyrophosphorylase</fullName>
    </alternativeName>
    <alternativeName>
        <fullName evidence="1">Pantetheine-phosphate adenylyltransferase</fullName>
        <shortName evidence="1">PPAT</shortName>
    </alternativeName>
</protein>
<sequence>MLPNTPRRAVYAGSFDPPTLGHLWMIRQAQSMFDELIVAIGINPDKRSTYTVAERQDMLCDITKMFPNVRTDVFENRFLVHYAREVDAGFIVRGIRSASDYEYERSMRHINSDLAPEISTVFLMPPREIAEVSSTMVKGLVGPEGWTETIHRYVPQAVYEKILAEHQHEN</sequence>
<keyword id="KW-0067">ATP-binding</keyword>
<keyword id="KW-0173">Coenzyme A biosynthesis</keyword>
<keyword id="KW-0963">Cytoplasm</keyword>
<keyword id="KW-0460">Magnesium</keyword>
<keyword id="KW-0547">Nucleotide-binding</keyword>
<keyword id="KW-0548">Nucleotidyltransferase</keyword>
<keyword id="KW-0808">Transferase</keyword>
<proteinExistence type="inferred from homology"/>
<comment type="function">
    <text evidence="1">Reversibly transfers an adenylyl group from ATP to 4'-phosphopantetheine, yielding dephospho-CoA (dPCoA) and pyrophosphate.</text>
</comment>
<comment type="catalytic activity">
    <reaction evidence="1">
        <text>(R)-4'-phosphopantetheine + ATP + H(+) = 3'-dephospho-CoA + diphosphate</text>
        <dbReference type="Rhea" id="RHEA:19801"/>
        <dbReference type="ChEBI" id="CHEBI:15378"/>
        <dbReference type="ChEBI" id="CHEBI:30616"/>
        <dbReference type="ChEBI" id="CHEBI:33019"/>
        <dbReference type="ChEBI" id="CHEBI:57328"/>
        <dbReference type="ChEBI" id="CHEBI:61723"/>
        <dbReference type="EC" id="2.7.7.3"/>
    </reaction>
</comment>
<comment type="cofactor">
    <cofactor evidence="1">
        <name>Mg(2+)</name>
        <dbReference type="ChEBI" id="CHEBI:18420"/>
    </cofactor>
</comment>
<comment type="pathway">
    <text evidence="1">Cofactor biosynthesis; coenzyme A biosynthesis; CoA from (R)-pantothenate: step 4/5.</text>
</comment>
<comment type="subunit">
    <text evidence="1">Homohexamer.</text>
</comment>
<comment type="subcellular location">
    <subcellularLocation>
        <location evidence="1">Cytoplasm</location>
    </subcellularLocation>
</comment>
<comment type="similarity">
    <text evidence="1">Belongs to the bacterial CoaD family.</text>
</comment>